<evidence type="ECO:0000255" key="1">
    <source>
        <dbReference type="HAMAP-Rule" id="MF_00508"/>
    </source>
</evidence>
<evidence type="ECO:0000305" key="2"/>
<keyword id="KW-1185">Reference proteome</keyword>
<keyword id="KW-0687">Ribonucleoprotein</keyword>
<keyword id="KW-0689">Ribosomal protein</keyword>
<reference key="1">
    <citation type="submission" date="2006-08" db="EMBL/GenBank/DDBJ databases">
        <title>Complete sequence of Alkalilimnicola ehrilichei MLHE-1.</title>
        <authorList>
            <person name="Copeland A."/>
            <person name="Lucas S."/>
            <person name="Lapidus A."/>
            <person name="Barry K."/>
            <person name="Detter J.C."/>
            <person name="Glavina del Rio T."/>
            <person name="Hammon N."/>
            <person name="Israni S."/>
            <person name="Dalin E."/>
            <person name="Tice H."/>
            <person name="Pitluck S."/>
            <person name="Sims D."/>
            <person name="Brettin T."/>
            <person name="Bruce D."/>
            <person name="Han C."/>
            <person name="Tapia R."/>
            <person name="Gilna P."/>
            <person name="Schmutz J."/>
            <person name="Larimer F."/>
            <person name="Land M."/>
            <person name="Hauser L."/>
            <person name="Kyrpides N."/>
            <person name="Mikhailova N."/>
            <person name="Oremland R.S."/>
            <person name="Hoeft S.E."/>
            <person name="Switzer-Blum J."/>
            <person name="Kulp T."/>
            <person name="King G."/>
            <person name="Tabita R."/>
            <person name="Witte B."/>
            <person name="Santini J.M."/>
            <person name="Basu P."/>
            <person name="Hollibaugh J.T."/>
            <person name="Xie G."/>
            <person name="Stolz J.F."/>
            <person name="Richardson P."/>
        </authorList>
    </citation>
    <scope>NUCLEOTIDE SEQUENCE [LARGE SCALE GENOMIC DNA]</scope>
    <source>
        <strain>ATCC BAA-1101 / DSM 17681 / MLHE-1</strain>
    </source>
</reference>
<feature type="chain" id="PRO_1000014981" description="Small ribosomal subunit protein uS10">
    <location>
        <begin position="1"/>
        <end position="103"/>
    </location>
</feature>
<accession>Q0ABH6</accession>
<protein>
    <recommendedName>
        <fullName evidence="1">Small ribosomal subunit protein uS10</fullName>
    </recommendedName>
    <alternativeName>
        <fullName evidence="2">30S ribosomal protein S10</fullName>
    </alternativeName>
</protein>
<name>RS10_ALKEH</name>
<proteinExistence type="inferred from homology"/>
<dbReference type="EMBL" id="CP000453">
    <property type="protein sequence ID" value="ABI55811.1"/>
    <property type="molecule type" value="Genomic_DNA"/>
</dbReference>
<dbReference type="RefSeq" id="WP_011628206.1">
    <property type="nucleotide sequence ID" value="NC_008340.1"/>
</dbReference>
<dbReference type="SMR" id="Q0ABH6"/>
<dbReference type="KEGG" id="aeh:Mlg_0457"/>
<dbReference type="eggNOG" id="COG0051">
    <property type="taxonomic scope" value="Bacteria"/>
</dbReference>
<dbReference type="HOGENOM" id="CLU_122625_1_3_6"/>
<dbReference type="OrthoDB" id="9804464at2"/>
<dbReference type="Proteomes" id="UP000001962">
    <property type="component" value="Chromosome"/>
</dbReference>
<dbReference type="GO" id="GO:1990904">
    <property type="term" value="C:ribonucleoprotein complex"/>
    <property type="evidence" value="ECO:0007669"/>
    <property type="project" value="UniProtKB-KW"/>
</dbReference>
<dbReference type="GO" id="GO:0005840">
    <property type="term" value="C:ribosome"/>
    <property type="evidence" value="ECO:0007669"/>
    <property type="project" value="UniProtKB-KW"/>
</dbReference>
<dbReference type="GO" id="GO:0003735">
    <property type="term" value="F:structural constituent of ribosome"/>
    <property type="evidence" value="ECO:0007669"/>
    <property type="project" value="InterPro"/>
</dbReference>
<dbReference type="GO" id="GO:0000049">
    <property type="term" value="F:tRNA binding"/>
    <property type="evidence" value="ECO:0007669"/>
    <property type="project" value="UniProtKB-UniRule"/>
</dbReference>
<dbReference type="GO" id="GO:0006412">
    <property type="term" value="P:translation"/>
    <property type="evidence" value="ECO:0007669"/>
    <property type="project" value="UniProtKB-UniRule"/>
</dbReference>
<dbReference type="FunFam" id="3.30.70.600:FF:000001">
    <property type="entry name" value="30S ribosomal protein S10"/>
    <property type="match status" value="1"/>
</dbReference>
<dbReference type="Gene3D" id="3.30.70.600">
    <property type="entry name" value="Ribosomal protein S10 domain"/>
    <property type="match status" value="1"/>
</dbReference>
<dbReference type="HAMAP" id="MF_00508">
    <property type="entry name" value="Ribosomal_uS10"/>
    <property type="match status" value="1"/>
</dbReference>
<dbReference type="InterPro" id="IPR001848">
    <property type="entry name" value="Ribosomal_uS10"/>
</dbReference>
<dbReference type="InterPro" id="IPR027486">
    <property type="entry name" value="Ribosomal_uS10_dom"/>
</dbReference>
<dbReference type="InterPro" id="IPR036838">
    <property type="entry name" value="Ribosomal_uS10_dom_sf"/>
</dbReference>
<dbReference type="NCBIfam" id="NF001861">
    <property type="entry name" value="PRK00596.1"/>
    <property type="match status" value="1"/>
</dbReference>
<dbReference type="NCBIfam" id="TIGR01049">
    <property type="entry name" value="rpsJ_bact"/>
    <property type="match status" value="1"/>
</dbReference>
<dbReference type="PANTHER" id="PTHR11700">
    <property type="entry name" value="30S RIBOSOMAL PROTEIN S10 FAMILY MEMBER"/>
    <property type="match status" value="1"/>
</dbReference>
<dbReference type="Pfam" id="PF00338">
    <property type="entry name" value="Ribosomal_S10"/>
    <property type="match status" value="1"/>
</dbReference>
<dbReference type="PRINTS" id="PR00971">
    <property type="entry name" value="RIBOSOMALS10"/>
</dbReference>
<dbReference type="SMART" id="SM01403">
    <property type="entry name" value="Ribosomal_S10"/>
    <property type="match status" value="1"/>
</dbReference>
<dbReference type="SUPFAM" id="SSF54999">
    <property type="entry name" value="Ribosomal protein S10"/>
    <property type="match status" value="1"/>
</dbReference>
<gene>
    <name evidence="1" type="primary">rpsJ</name>
    <name type="ordered locus">Mlg_0457</name>
</gene>
<sequence length="103" mass="11839">MANQRIRIRLKAFDHRLIDQSAREIVETAKRTGAHVKGPIPLPVKKEKFTILISPHVNKDARDQYEIRTHKRLMDIIDPTDKTVDALMKLDLAAGVDVQIKLY</sequence>
<organism>
    <name type="scientific">Alkalilimnicola ehrlichii (strain ATCC BAA-1101 / DSM 17681 / MLHE-1)</name>
    <dbReference type="NCBI Taxonomy" id="187272"/>
    <lineage>
        <taxon>Bacteria</taxon>
        <taxon>Pseudomonadati</taxon>
        <taxon>Pseudomonadota</taxon>
        <taxon>Gammaproteobacteria</taxon>
        <taxon>Chromatiales</taxon>
        <taxon>Ectothiorhodospiraceae</taxon>
        <taxon>Alkalilimnicola</taxon>
    </lineage>
</organism>
<comment type="function">
    <text evidence="1">Involved in the binding of tRNA to the ribosomes.</text>
</comment>
<comment type="subunit">
    <text evidence="1">Part of the 30S ribosomal subunit.</text>
</comment>
<comment type="similarity">
    <text evidence="1">Belongs to the universal ribosomal protein uS10 family.</text>
</comment>